<evidence type="ECO:0000255" key="1">
    <source>
        <dbReference type="PROSITE-ProRule" id="PRU00388"/>
    </source>
</evidence>
<evidence type="ECO:0000269" key="2">
    <source>
    </source>
</evidence>
<evidence type="ECO:0000269" key="3">
    <source>
    </source>
</evidence>
<evidence type="ECO:0000305" key="4"/>
<evidence type="ECO:0007744" key="5">
    <source>
    </source>
</evidence>
<protein>
    <recommendedName>
        <fullName>Ubiquitin-conjugating enzyme E2 variant 1C</fullName>
        <shortName>Ubc enzyme variant 1C</shortName>
    </recommendedName>
    <alternativeName>
        <fullName>Protein MMS ZWEI HOMOLOG 3</fullName>
    </alternativeName>
</protein>
<accession>Q9SJ44</accession>
<accession>A8MQX2</accession>
<accession>Q3EBM3</accession>
<dbReference type="EMBL" id="AC007017">
    <property type="protein sequence ID" value="AAD21451.1"/>
    <property type="molecule type" value="Genomic_DNA"/>
</dbReference>
<dbReference type="EMBL" id="CP002685">
    <property type="protein sequence ID" value="AEC09199.1"/>
    <property type="molecule type" value="Genomic_DNA"/>
</dbReference>
<dbReference type="EMBL" id="CP002685">
    <property type="protein sequence ID" value="AEC09200.1"/>
    <property type="molecule type" value="Genomic_DNA"/>
</dbReference>
<dbReference type="EMBL" id="CP002685">
    <property type="protein sequence ID" value="AEC09201.1"/>
    <property type="molecule type" value="Genomic_DNA"/>
</dbReference>
<dbReference type="EMBL" id="AY062760">
    <property type="protein sequence ID" value="AAL32838.1"/>
    <property type="molecule type" value="mRNA"/>
</dbReference>
<dbReference type="EMBL" id="AY093382">
    <property type="protein sequence ID" value="AAM13381.1"/>
    <property type="molecule type" value="mRNA"/>
</dbReference>
<dbReference type="PIR" id="D84776">
    <property type="entry name" value="D84776"/>
</dbReference>
<dbReference type="RefSeq" id="NP_001078011.1">
    <molecule id="Q9SJ44-3"/>
    <property type="nucleotide sequence ID" value="NM_001084542.1"/>
</dbReference>
<dbReference type="RefSeq" id="NP_565834.1">
    <molecule id="Q9SJ44-1"/>
    <property type="nucleotide sequence ID" value="NM_129165.4"/>
</dbReference>
<dbReference type="RefSeq" id="NP_850259.1">
    <molecule id="Q9SJ44-2"/>
    <property type="nucleotide sequence ID" value="NM_179928.2"/>
</dbReference>
<dbReference type="SMR" id="Q9SJ44"/>
<dbReference type="BioGRID" id="3523">
    <property type="interactions" value="2"/>
</dbReference>
<dbReference type="FunCoup" id="Q9SJ44">
    <property type="interactions" value="4751"/>
</dbReference>
<dbReference type="STRING" id="3702.Q9SJ44"/>
<dbReference type="iPTMnet" id="Q9SJ44"/>
<dbReference type="MetOSite" id="Q9SJ44"/>
<dbReference type="PaxDb" id="3702-AT2G36060.2"/>
<dbReference type="ProteomicsDB" id="245290">
    <molecule id="Q9SJ44-1"/>
</dbReference>
<dbReference type="EnsemblPlants" id="AT2G36060.1">
    <molecule id="Q9SJ44-1"/>
    <property type="protein sequence ID" value="AT2G36060.1"/>
    <property type="gene ID" value="AT2G36060"/>
</dbReference>
<dbReference type="EnsemblPlants" id="AT2G36060.2">
    <molecule id="Q9SJ44-2"/>
    <property type="protein sequence ID" value="AT2G36060.2"/>
    <property type="gene ID" value="AT2G36060"/>
</dbReference>
<dbReference type="EnsemblPlants" id="AT2G36060.3">
    <molecule id="Q9SJ44-3"/>
    <property type="protein sequence ID" value="AT2G36060.3"/>
    <property type="gene ID" value="AT2G36060"/>
</dbReference>
<dbReference type="GeneID" id="818179"/>
<dbReference type="Gramene" id="AT2G36060.1">
    <molecule id="Q9SJ44-1"/>
    <property type="protein sequence ID" value="AT2G36060.1"/>
    <property type="gene ID" value="AT2G36060"/>
</dbReference>
<dbReference type="Gramene" id="AT2G36060.2">
    <molecule id="Q9SJ44-2"/>
    <property type="protein sequence ID" value="AT2G36060.2"/>
    <property type="gene ID" value="AT2G36060"/>
</dbReference>
<dbReference type="Gramene" id="AT2G36060.3">
    <molecule id="Q9SJ44-3"/>
    <property type="protein sequence ID" value="AT2G36060.3"/>
    <property type="gene ID" value="AT2G36060"/>
</dbReference>
<dbReference type="KEGG" id="ath:AT2G36060"/>
<dbReference type="Araport" id="AT2G36060"/>
<dbReference type="TAIR" id="AT2G36060">
    <property type="gene designation" value="MMZ3"/>
</dbReference>
<dbReference type="eggNOG" id="KOG0896">
    <property type="taxonomic scope" value="Eukaryota"/>
</dbReference>
<dbReference type="InParanoid" id="Q9SJ44"/>
<dbReference type="OMA" id="FENRMYQ"/>
<dbReference type="OrthoDB" id="6508832at2759"/>
<dbReference type="PhylomeDB" id="Q9SJ44"/>
<dbReference type="CD-CODE" id="4299E36E">
    <property type="entry name" value="Nucleolus"/>
</dbReference>
<dbReference type="PRO" id="PR:Q9SJ44"/>
<dbReference type="Proteomes" id="UP000006548">
    <property type="component" value="Chromosome 2"/>
</dbReference>
<dbReference type="ExpressionAtlas" id="Q9SJ44">
    <property type="expression patterns" value="baseline and differential"/>
</dbReference>
<dbReference type="GO" id="GO:0005829">
    <property type="term" value="C:cytosol"/>
    <property type="evidence" value="ECO:0007005"/>
    <property type="project" value="TAIR"/>
</dbReference>
<dbReference type="GO" id="GO:0005783">
    <property type="term" value="C:endoplasmic reticulum"/>
    <property type="evidence" value="ECO:0007005"/>
    <property type="project" value="TAIR"/>
</dbReference>
<dbReference type="GO" id="GO:0031372">
    <property type="term" value="C:UBC13-MMS2 complex"/>
    <property type="evidence" value="ECO:0000353"/>
    <property type="project" value="TAIR"/>
</dbReference>
<dbReference type="GO" id="GO:1902916">
    <property type="term" value="P:positive regulation of protein polyubiquitination"/>
    <property type="evidence" value="ECO:0000314"/>
    <property type="project" value="TAIR"/>
</dbReference>
<dbReference type="GO" id="GO:0006301">
    <property type="term" value="P:postreplication repair"/>
    <property type="evidence" value="ECO:0000316"/>
    <property type="project" value="TAIR"/>
</dbReference>
<dbReference type="CDD" id="cd23807">
    <property type="entry name" value="UEV_UBE2V"/>
    <property type="match status" value="1"/>
</dbReference>
<dbReference type="FunFam" id="3.10.110.10:FF:000019">
    <property type="entry name" value="Ubiquitin-conjugating enzyme E2 variant 1C"/>
    <property type="match status" value="1"/>
</dbReference>
<dbReference type="Gene3D" id="3.10.110.10">
    <property type="entry name" value="Ubiquitin Conjugating Enzyme"/>
    <property type="match status" value="1"/>
</dbReference>
<dbReference type="InterPro" id="IPR000608">
    <property type="entry name" value="UBQ-conjugat_E2_core"/>
</dbReference>
<dbReference type="InterPro" id="IPR016135">
    <property type="entry name" value="UBQ-conjugating_enzyme/RWD"/>
</dbReference>
<dbReference type="PANTHER" id="PTHR24068">
    <property type="entry name" value="UBIQUITIN-CONJUGATING ENZYME E2"/>
    <property type="match status" value="1"/>
</dbReference>
<dbReference type="Pfam" id="PF00179">
    <property type="entry name" value="UQ_con"/>
    <property type="match status" value="1"/>
</dbReference>
<dbReference type="SMART" id="SM00212">
    <property type="entry name" value="UBCc"/>
    <property type="match status" value="1"/>
</dbReference>
<dbReference type="SUPFAM" id="SSF54495">
    <property type="entry name" value="UBC-like"/>
    <property type="match status" value="1"/>
</dbReference>
<dbReference type="PROSITE" id="PS50127">
    <property type="entry name" value="UBC_2"/>
    <property type="match status" value="1"/>
</dbReference>
<proteinExistence type="evidence at protein level"/>
<comment type="function">
    <text evidence="2 3">Has no ubiquitin ligase activity on its own. The heterodimer with UBC catalyzes the synthesis of non-canonical poly-ubiquitin chains that are linked through 'Lys-63'. This type of poly-ubiquitination does not lead to protein degradation by the proteasome. Mediates transcriptional activation of target genes. May play a role in the control of progress through the cell cycle and differentiation. May play a role in the error-free DNA repair pathway and contributes to the survival of cells after DNA damage.</text>
</comment>
<comment type="subunit">
    <text evidence="2">Heterodimer with UBC35 or UBC36.</text>
</comment>
<comment type="alternative products">
    <event type="alternative splicing"/>
    <isoform>
        <id>Q9SJ44-1</id>
        <name>1</name>
        <sequence type="displayed"/>
    </isoform>
    <isoform>
        <id>Q9SJ44-2</id>
        <name>2</name>
        <sequence type="described" ref="VSP_034852"/>
    </isoform>
    <isoform>
        <id>Q9SJ44-3</id>
        <name>3</name>
        <sequence type="described" ref="VSP_034853"/>
    </isoform>
</comment>
<comment type="tissue specificity">
    <text evidence="3">Expressed in roots, shoots, leaves, stems and flowers, but not in pollen.</text>
</comment>
<comment type="developmental stage">
    <text evidence="3">Detected in seedlings 6 hours post-germination, but not 2 days post-germination.</text>
</comment>
<comment type="induction">
    <text evidence="3">Not induced by stresses.</text>
</comment>
<comment type="miscellaneous">
    <molecule>Isoform 2</molecule>
    <text evidence="4">May be due to a competing donor splice site.</text>
</comment>
<comment type="similarity">
    <text evidence="1">Belongs to the ubiquitin-conjugating enzyme family.</text>
</comment>
<feature type="initiator methionine" description="Removed" evidence="5">
    <location>
        <position position="1"/>
    </location>
</feature>
<feature type="chain" id="PRO_0000344628" description="Ubiquitin-conjugating enzyme E2 variant 1C">
    <location>
        <begin position="2"/>
        <end position="145"/>
    </location>
</feature>
<feature type="domain" description="UBC core" evidence="1">
    <location>
        <begin position="12"/>
        <end position="145"/>
    </location>
</feature>
<feature type="splice variant" id="VSP_034852" description="In isoform 2." evidence="4">
    <original>N</original>
    <variation>NV</variation>
    <location>
        <position position="57"/>
    </location>
</feature>
<feature type="splice variant" id="VSP_034853" description="In isoform 3." evidence="4">
    <location>
        <position position="99"/>
    </location>
</feature>
<organism>
    <name type="scientific">Arabidopsis thaliana</name>
    <name type="common">Mouse-ear cress</name>
    <dbReference type="NCBI Taxonomy" id="3702"/>
    <lineage>
        <taxon>Eukaryota</taxon>
        <taxon>Viridiplantae</taxon>
        <taxon>Streptophyta</taxon>
        <taxon>Embryophyta</taxon>
        <taxon>Tracheophyta</taxon>
        <taxon>Spermatophyta</taxon>
        <taxon>Magnoliopsida</taxon>
        <taxon>eudicotyledons</taxon>
        <taxon>Gunneridae</taxon>
        <taxon>Pentapetalae</taxon>
        <taxon>rosids</taxon>
        <taxon>malvids</taxon>
        <taxon>Brassicales</taxon>
        <taxon>Brassicaceae</taxon>
        <taxon>Camelineae</taxon>
        <taxon>Arabidopsis</taxon>
    </lineage>
</organism>
<gene>
    <name type="primary">UEV1C</name>
    <name type="synonym">MMZ3</name>
    <name type="ordered locus">At2g36060</name>
    <name type="ORF">F11F19.3</name>
</gene>
<reference key="1">
    <citation type="journal article" date="1999" name="Nature">
        <title>Sequence and analysis of chromosome 2 of the plant Arabidopsis thaliana.</title>
        <authorList>
            <person name="Lin X."/>
            <person name="Kaul S."/>
            <person name="Rounsley S.D."/>
            <person name="Shea T.P."/>
            <person name="Benito M.-I."/>
            <person name="Town C.D."/>
            <person name="Fujii C.Y."/>
            <person name="Mason T.M."/>
            <person name="Bowman C.L."/>
            <person name="Barnstead M.E."/>
            <person name="Feldblyum T.V."/>
            <person name="Buell C.R."/>
            <person name="Ketchum K.A."/>
            <person name="Lee J.J."/>
            <person name="Ronning C.M."/>
            <person name="Koo H.L."/>
            <person name="Moffat K.S."/>
            <person name="Cronin L.A."/>
            <person name="Shen M."/>
            <person name="Pai G."/>
            <person name="Van Aken S."/>
            <person name="Umayam L."/>
            <person name="Tallon L.J."/>
            <person name="Gill J.E."/>
            <person name="Adams M.D."/>
            <person name="Carrera A.J."/>
            <person name="Creasy T.H."/>
            <person name="Goodman H.M."/>
            <person name="Somerville C.R."/>
            <person name="Copenhaver G.P."/>
            <person name="Preuss D."/>
            <person name="Nierman W.C."/>
            <person name="White O."/>
            <person name="Eisen J.A."/>
            <person name="Salzberg S.L."/>
            <person name="Fraser C.M."/>
            <person name="Venter J.C."/>
        </authorList>
    </citation>
    <scope>NUCLEOTIDE SEQUENCE [LARGE SCALE GENOMIC DNA]</scope>
    <source>
        <strain>cv. Columbia</strain>
    </source>
</reference>
<reference key="2">
    <citation type="journal article" date="2017" name="Plant J.">
        <title>Araport11: a complete reannotation of the Arabidopsis thaliana reference genome.</title>
        <authorList>
            <person name="Cheng C.Y."/>
            <person name="Krishnakumar V."/>
            <person name="Chan A.P."/>
            <person name="Thibaud-Nissen F."/>
            <person name="Schobel S."/>
            <person name="Town C.D."/>
        </authorList>
    </citation>
    <scope>GENOME REANNOTATION</scope>
    <source>
        <strain>cv. Columbia</strain>
    </source>
</reference>
<reference key="3">
    <citation type="journal article" date="2003" name="Science">
        <title>Empirical analysis of transcriptional activity in the Arabidopsis genome.</title>
        <authorList>
            <person name="Yamada K."/>
            <person name="Lim J."/>
            <person name="Dale J.M."/>
            <person name="Chen H."/>
            <person name="Shinn P."/>
            <person name="Palm C.J."/>
            <person name="Southwick A.M."/>
            <person name="Wu H.C."/>
            <person name="Kim C.J."/>
            <person name="Nguyen M."/>
            <person name="Pham P.K."/>
            <person name="Cheuk R.F."/>
            <person name="Karlin-Newmann G."/>
            <person name="Liu S.X."/>
            <person name="Lam B."/>
            <person name="Sakano H."/>
            <person name="Wu T."/>
            <person name="Yu G."/>
            <person name="Miranda M."/>
            <person name="Quach H.L."/>
            <person name="Tripp M."/>
            <person name="Chang C.H."/>
            <person name="Lee J.M."/>
            <person name="Toriumi M.J."/>
            <person name="Chan M.M."/>
            <person name="Tang C.C."/>
            <person name="Onodera C.S."/>
            <person name="Deng J.M."/>
            <person name="Akiyama K."/>
            <person name="Ansari Y."/>
            <person name="Arakawa T."/>
            <person name="Banh J."/>
            <person name="Banno F."/>
            <person name="Bowser L."/>
            <person name="Brooks S.Y."/>
            <person name="Carninci P."/>
            <person name="Chao Q."/>
            <person name="Choy N."/>
            <person name="Enju A."/>
            <person name="Goldsmith A.D."/>
            <person name="Gurjal M."/>
            <person name="Hansen N.F."/>
            <person name="Hayashizaki Y."/>
            <person name="Johnson-Hopson C."/>
            <person name="Hsuan V.W."/>
            <person name="Iida K."/>
            <person name="Karnes M."/>
            <person name="Khan S."/>
            <person name="Koesema E."/>
            <person name="Ishida J."/>
            <person name="Jiang P.X."/>
            <person name="Jones T."/>
            <person name="Kawai J."/>
            <person name="Kamiya A."/>
            <person name="Meyers C."/>
            <person name="Nakajima M."/>
            <person name="Narusaka M."/>
            <person name="Seki M."/>
            <person name="Sakurai T."/>
            <person name="Satou M."/>
            <person name="Tamse R."/>
            <person name="Vaysberg M."/>
            <person name="Wallender E.K."/>
            <person name="Wong C."/>
            <person name="Yamamura Y."/>
            <person name="Yuan S."/>
            <person name="Shinozaki K."/>
            <person name="Davis R.W."/>
            <person name="Theologis A."/>
            <person name="Ecker J.R."/>
        </authorList>
    </citation>
    <scope>NUCLEOTIDE SEQUENCE [LARGE SCALE MRNA] (ISOFORM 1)</scope>
    <source>
        <strain>cv. Columbia</strain>
    </source>
</reference>
<reference key="4">
    <citation type="journal article" date="2007" name="Plant Cell">
        <title>Ubiquitin lysine 63 chain forming ligases regulate apical dominance in Arabidopsis.</title>
        <authorList>
            <person name="Yin X.-J."/>
            <person name="Volk S."/>
            <person name="Ljung K."/>
            <person name="Mehlmer N."/>
            <person name="Dolezal K."/>
            <person name="Ditengou F."/>
            <person name="Hanano S."/>
            <person name="Davis S.J."/>
            <person name="Schmelzer E."/>
            <person name="Sandberg G."/>
            <person name="Teige M."/>
            <person name="Palme K."/>
            <person name="Pickart C."/>
            <person name="Bachmair A."/>
        </authorList>
    </citation>
    <scope>IDENTIFICATION</scope>
    <scope>FUNCTION</scope>
    <scope>SUBUNIT</scope>
</reference>
<reference key="5">
    <citation type="journal article" date="2008" name="Plant Cell">
        <title>Arabidopsis UEV1D promotes lysine-63-linked polyubiquitination and is involved in DNA damage response.</title>
        <authorList>
            <person name="Wen R."/>
            <person name="Torres-Acosta J.A."/>
            <person name="Pastushok L."/>
            <person name="Lai X."/>
            <person name="Pelzer L."/>
            <person name="Wang H."/>
            <person name="Xiao W."/>
        </authorList>
    </citation>
    <scope>FUNCTION</scope>
    <scope>TISSUE SPECIFICITY</scope>
    <scope>DEVELOPMENTAL STAGE</scope>
    <scope>INDUCTION</scope>
    <scope>INTERACTION WITH UBC35 AND UBC 36</scope>
</reference>
<reference key="6">
    <citation type="journal article" date="2009" name="Plant Physiol.">
        <title>Large-scale Arabidopsis phosphoproteome profiling reveals novel chloroplast kinase substrates and phosphorylation networks.</title>
        <authorList>
            <person name="Reiland S."/>
            <person name="Messerli G."/>
            <person name="Baerenfaller K."/>
            <person name="Gerrits B."/>
            <person name="Endler A."/>
            <person name="Grossmann J."/>
            <person name="Gruissem W."/>
            <person name="Baginsky S."/>
        </authorList>
    </citation>
    <scope>IDENTIFICATION BY MASS SPECTROMETRY [LARGE SCALE ANALYSIS]</scope>
</reference>
<reference key="7">
    <citation type="journal article" date="2012" name="Mol. Cell. Proteomics">
        <title>Comparative large-scale characterisation of plant vs. mammal proteins reveals similar and idiosyncratic N-alpha acetylation features.</title>
        <authorList>
            <person name="Bienvenut W.V."/>
            <person name="Sumpton D."/>
            <person name="Martinez A."/>
            <person name="Lilla S."/>
            <person name="Espagne C."/>
            <person name="Meinnel T."/>
            <person name="Giglione C."/>
        </authorList>
    </citation>
    <scope>CLEAVAGE OF INITIATOR METHIONINE [LARGE SCALE ANALYSIS]</scope>
    <scope>IDENTIFICATION BY MASS SPECTROMETRY [LARGE SCALE ANALYSIS]</scope>
</reference>
<keyword id="KW-0025">Alternative splicing</keyword>
<keyword id="KW-1185">Reference proteome</keyword>
<name>UEV1C_ARATH</name>
<sequence length="145" mass="16481">MTLGSGSSVVVPRNFRLLEELERGEKGIGDGTVSYGMDDGDDIYMRSWTGTIIGPHNTVHEGRIYQLKLFCDKDYPEKPPTVRFHSRINMTCVNHDTGVVDSKKFGVLANWQRQYTMEDILTQLKKEMAASHNRKLVQPPEGTFF</sequence>